<feature type="chain" id="PRO_0000074880" description="Sensor protein SphS">
    <location>
        <begin position="1"/>
        <end position="413"/>
    </location>
</feature>
<feature type="domain" description="Histidine kinase" evidence="1">
    <location>
        <begin position="176"/>
        <end position="398"/>
    </location>
</feature>
<feature type="modified residue" description="Phosphohistidine; by autocatalysis" evidence="1">
    <location>
        <position position="179"/>
    </location>
</feature>
<feature type="sequence conflict" description="In Ref. 1; AA sequence." evidence="2" ref="1">
    <original>VTGGAWLRVQLPQEPSLTPALKIGTGRRSG</original>
    <variation>SPAGLGCGYNCPKNHPSPLRLRSELDVAAA</variation>
    <location>
        <begin position="384"/>
        <end position="413"/>
    </location>
</feature>
<proteinExistence type="evidence at protein level"/>
<evidence type="ECO:0000255" key="1">
    <source>
        <dbReference type="PROSITE-ProRule" id="PRU00107"/>
    </source>
</evidence>
<evidence type="ECO:0000305" key="2"/>
<protein>
    <recommendedName>
        <fullName>Sensor protein SphS</fullName>
        <ecNumber>2.7.13.3</ecNumber>
    </recommendedName>
</protein>
<accession>P39664</accession>
<accession>Q31PH8</accession>
<comment type="function">
    <text>Member of the two-component regulatory system SphR/SphS. Sensory kinase. Is involved in inducible production of alkaline phosphatase in response to phosphate limitation as it is directly involved in the regulation of phoA transcription in response to phosphate limitation. SphS functions as a protein kinase that phosphorylates SphR.</text>
</comment>
<comment type="catalytic activity">
    <reaction>
        <text>ATP + protein L-histidine = ADP + protein N-phospho-L-histidine.</text>
        <dbReference type="EC" id="2.7.13.3"/>
    </reaction>
</comment>
<comment type="subcellular location">
    <subcellularLocation>
        <location evidence="2">Cytoplasm</location>
    </subcellularLocation>
</comment>
<gene>
    <name type="primary">sphS</name>
    <name type="ordered locus">Synpcc7942_1011</name>
</gene>
<organism>
    <name type="scientific">Synechococcus elongatus (strain ATCC 33912 / PCC 7942 / FACHB-805)</name>
    <name type="common">Anacystis nidulans R2</name>
    <dbReference type="NCBI Taxonomy" id="1140"/>
    <lineage>
        <taxon>Bacteria</taxon>
        <taxon>Bacillati</taxon>
        <taxon>Cyanobacteriota</taxon>
        <taxon>Cyanophyceae</taxon>
        <taxon>Synechococcales</taxon>
        <taxon>Synechococcaceae</taxon>
        <taxon>Synechococcus</taxon>
    </lineage>
</organism>
<dbReference type="EC" id="2.7.13.3"/>
<dbReference type="EMBL" id="D13172">
    <property type="protein sequence ID" value="BAA02454.1"/>
    <property type="molecule type" value="Genomic_DNA"/>
</dbReference>
<dbReference type="EMBL" id="CP000100">
    <property type="protein sequence ID" value="ABB57041.1"/>
    <property type="molecule type" value="Genomic_DNA"/>
</dbReference>
<dbReference type="PIR" id="S32932">
    <property type="entry name" value="S32932"/>
</dbReference>
<dbReference type="RefSeq" id="WP_011377829.1">
    <property type="nucleotide sequence ID" value="NZ_JACJTX010000003.1"/>
</dbReference>
<dbReference type="SMR" id="P39664"/>
<dbReference type="STRING" id="1140.Synpcc7942_1011"/>
<dbReference type="PaxDb" id="1140-Synpcc7942_1011"/>
<dbReference type="KEGG" id="syf:Synpcc7942_1011"/>
<dbReference type="eggNOG" id="COG5002">
    <property type="taxonomic scope" value="Bacteria"/>
</dbReference>
<dbReference type="HOGENOM" id="CLU_000445_89_2_3"/>
<dbReference type="OrthoDB" id="9773956at2"/>
<dbReference type="BioCyc" id="SYNEL:SYNPCC7942_1011-MONOMER"/>
<dbReference type="BRENDA" id="2.7.13.3">
    <property type="organism ID" value="6187"/>
</dbReference>
<dbReference type="Proteomes" id="UP000889800">
    <property type="component" value="Chromosome"/>
</dbReference>
<dbReference type="GO" id="GO:0005737">
    <property type="term" value="C:cytoplasm"/>
    <property type="evidence" value="ECO:0007669"/>
    <property type="project" value="UniProtKB-SubCell"/>
</dbReference>
<dbReference type="GO" id="GO:0005886">
    <property type="term" value="C:plasma membrane"/>
    <property type="evidence" value="ECO:0007669"/>
    <property type="project" value="TreeGrafter"/>
</dbReference>
<dbReference type="GO" id="GO:0005524">
    <property type="term" value="F:ATP binding"/>
    <property type="evidence" value="ECO:0007669"/>
    <property type="project" value="UniProtKB-KW"/>
</dbReference>
<dbReference type="GO" id="GO:0004721">
    <property type="term" value="F:phosphoprotein phosphatase activity"/>
    <property type="evidence" value="ECO:0007669"/>
    <property type="project" value="TreeGrafter"/>
</dbReference>
<dbReference type="GO" id="GO:0000155">
    <property type="term" value="F:phosphorelay sensor kinase activity"/>
    <property type="evidence" value="ECO:0007669"/>
    <property type="project" value="InterPro"/>
</dbReference>
<dbReference type="GO" id="GO:0016036">
    <property type="term" value="P:cellular response to phosphate starvation"/>
    <property type="evidence" value="ECO:0007669"/>
    <property type="project" value="TreeGrafter"/>
</dbReference>
<dbReference type="GO" id="GO:0006355">
    <property type="term" value="P:regulation of DNA-templated transcription"/>
    <property type="evidence" value="ECO:0007669"/>
    <property type="project" value="InterPro"/>
</dbReference>
<dbReference type="CDD" id="cd00075">
    <property type="entry name" value="HATPase"/>
    <property type="match status" value="1"/>
</dbReference>
<dbReference type="CDD" id="cd00082">
    <property type="entry name" value="HisKA"/>
    <property type="match status" value="1"/>
</dbReference>
<dbReference type="CDD" id="cd00130">
    <property type="entry name" value="PAS"/>
    <property type="match status" value="1"/>
</dbReference>
<dbReference type="FunFam" id="1.10.287.130:FF:000001">
    <property type="entry name" value="Two-component sensor histidine kinase"/>
    <property type="match status" value="1"/>
</dbReference>
<dbReference type="Gene3D" id="1.10.287.130">
    <property type="match status" value="1"/>
</dbReference>
<dbReference type="Gene3D" id="3.30.565.10">
    <property type="entry name" value="Histidine kinase-like ATPase, C-terminal domain"/>
    <property type="match status" value="1"/>
</dbReference>
<dbReference type="InterPro" id="IPR050351">
    <property type="entry name" value="2-comp_sensor_kinase"/>
</dbReference>
<dbReference type="InterPro" id="IPR036890">
    <property type="entry name" value="HATPase_C_sf"/>
</dbReference>
<dbReference type="InterPro" id="IPR005467">
    <property type="entry name" value="His_kinase_dom"/>
</dbReference>
<dbReference type="InterPro" id="IPR003661">
    <property type="entry name" value="HisK_dim/P_dom"/>
</dbReference>
<dbReference type="InterPro" id="IPR036097">
    <property type="entry name" value="HisK_dim/P_sf"/>
</dbReference>
<dbReference type="InterPro" id="IPR000014">
    <property type="entry name" value="PAS"/>
</dbReference>
<dbReference type="InterPro" id="IPR013767">
    <property type="entry name" value="PAS_fold"/>
</dbReference>
<dbReference type="InterPro" id="IPR004358">
    <property type="entry name" value="Sig_transdc_His_kin-like_C"/>
</dbReference>
<dbReference type="PANTHER" id="PTHR45453">
    <property type="entry name" value="PHOSPHATE REGULON SENSOR PROTEIN PHOR"/>
    <property type="match status" value="1"/>
</dbReference>
<dbReference type="PANTHER" id="PTHR45453:SF1">
    <property type="entry name" value="PHOSPHATE REGULON SENSOR PROTEIN PHOR"/>
    <property type="match status" value="1"/>
</dbReference>
<dbReference type="Pfam" id="PF02518">
    <property type="entry name" value="HATPase_c"/>
    <property type="match status" value="1"/>
</dbReference>
<dbReference type="Pfam" id="PF00512">
    <property type="entry name" value="HisKA"/>
    <property type="match status" value="1"/>
</dbReference>
<dbReference type="Pfam" id="PF00989">
    <property type="entry name" value="PAS"/>
    <property type="match status" value="1"/>
</dbReference>
<dbReference type="PRINTS" id="PR00344">
    <property type="entry name" value="BCTRLSENSOR"/>
</dbReference>
<dbReference type="SMART" id="SM00387">
    <property type="entry name" value="HATPase_c"/>
    <property type="match status" value="1"/>
</dbReference>
<dbReference type="SMART" id="SM00388">
    <property type="entry name" value="HisKA"/>
    <property type="match status" value="1"/>
</dbReference>
<dbReference type="SMART" id="SM00091">
    <property type="entry name" value="PAS"/>
    <property type="match status" value="1"/>
</dbReference>
<dbReference type="SUPFAM" id="SSF55874">
    <property type="entry name" value="ATPase domain of HSP90 chaperone/DNA topoisomerase II/histidine kinase"/>
    <property type="match status" value="1"/>
</dbReference>
<dbReference type="SUPFAM" id="SSF47384">
    <property type="entry name" value="Homodimeric domain of signal transducing histidine kinase"/>
    <property type="match status" value="1"/>
</dbReference>
<dbReference type="PROSITE" id="PS50109">
    <property type="entry name" value="HIS_KIN"/>
    <property type="match status" value="1"/>
</dbReference>
<reference key="1">
    <citation type="journal article" date="1993" name="Mol. Microbiol.">
        <title>Sensor and regulator proteins from the cyanobacterium Synechococcus species PCC7942 that belong to the bacterial signal-transduction protein families: implication in the adaptive response to phosphate limitation.</title>
        <authorList>
            <person name="Aiba H."/>
            <person name="Nagaya M."/>
            <person name="Mizuno T."/>
        </authorList>
    </citation>
    <scope>NUCLEOTIDE SEQUENCE [GENOMIC DNA]</scope>
    <scope>PROTEIN SEQUENCE OF N-TERMINUS</scope>
</reference>
<reference key="2">
    <citation type="submission" date="2005-08" db="EMBL/GenBank/DDBJ databases">
        <title>Complete sequence of chromosome 1 of Synechococcus elongatus PCC 7942.</title>
        <authorList>
            <consortium name="US DOE Joint Genome Institute"/>
            <person name="Copeland A."/>
            <person name="Lucas S."/>
            <person name="Lapidus A."/>
            <person name="Barry K."/>
            <person name="Detter J.C."/>
            <person name="Glavina T."/>
            <person name="Hammon N."/>
            <person name="Israni S."/>
            <person name="Pitluck S."/>
            <person name="Schmutz J."/>
            <person name="Larimer F."/>
            <person name="Land M."/>
            <person name="Kyrpides N."/>
            <person name="Lykidis A."/>
            <person name="Golden S."/>
            <person name="Richardson P."/>
        </authorList>
    </citation>
    <scope>NUCLEOTIDE SEQUENCE [LARGE SCALE GENOMIC DNA]</scope>
    <source>
        <strain>ATCC 33912 / PCC 7942 / FACHB-805</strain>
    </source>
</reference>
<keyword id="KW-0067">ATP-binding</keyword>
<keyword id="KW-0963">Cytoplasm</keyword>
<keyword id="KW-0903">Direct protein sequencing</keyword>
<keyword id="KW-0418">Kinase</keyword>
<keyword id="KW-0547">Nucleotide-binding</keyword>
<keyword id="KW-0597">Phosphoprotein</keyword>
<keyword id="KW-1185">Reference proteome</keyword>
<keyword id="KW-0808">Transferase</keyword>
<keyword id="KW-0902">Two-component regulatory system</keyword>
<sequence length="413" mass="46216">MAAWEFALGLLTASLWRWARKWRSPVKVKPMLAAVSSLEPQLEQITTDLRDRDRLLEDLPVSFLLLDADNLVLEANRSARVLLALPPEDYCRPLLEVVRSYELDRLVARCRAANAPQTDRWTLTPVNPDPLQVVPQTPRPVQGQAIPLSNGQIGVLIEDRQELVDLAQQRNRWVSDVAHELKTPLTSIRLLAEALRDRLQDEPQVWVDRLLGETQRLGQLVQDLLELSRLEQGPSGLQKLEAVDLVALLTSVRNSLEPLAEPLRLGWAYQGPEQGFVRGDRQRLFRLWLNLVDNAIRHSPSGGCLYVELRQRGDTWICDLYDDGPGFADADLPYLFERFYRGDPSRVRPAAASSSSPGSGLGLAIARQVVEAHQGRISARNHPVTGGAWLRVQLPQEPSLTPALKIGTGRRSG</sequence>
<name>SPHS_SYNE7</name>